<evidence type="ECO:0000255" key="1">
    <source>
        <dbReference type="HAMAP-Rule" id="MF_00229"/>
    </source>
</evidence>
<protein>
    <recommendedName>
        <fullName evidence="1">Histidine ammonia-lyase</fullName>
        <shortName evidence="1">Histidase</shortName>
        <ecNumber evidence="1">4.3.1.3</ecNumber>
    </recommendedName>
</protein>
<keyword id="KW-0963">Cytoplasm</keyword>
<keyword id="KW-0369">Histidine metabolism</keyword>
<keyword id="KW-0456">Lyase</keyword>
<feature type="chain" id="PRO_1000100456" description="Histidine ammonia-lyase">
    <location>
        <begin position="1"/>
        <end position="510"/>
    </location>
</feature>
<feature type="modified residue" description="2,3-didehydroalanine (Ser)" evidence="1">
    <location>
        <position position="144"/>
    </location>
</feature>
<feature type="cross-link" description="5-imidazolinone (Ala-Gly)" evidence="1">
    <location>
        <begin position="143"/>
        <end position="145"/>
    </location>
</feature>
<dbReference type="EC" id="4.3.1.3" evidence="1"/>
<dbReference type="EMBL" id="CP001133">
    <property type="protein sequence ID" value="ACH63495.1"/>
    <property type="molecule type" value="Genomic_DNA"/>
</dbReference>
<dbReference type="RefSeq" id="WP_012534709.1">
    <property type="nucleotide sequence ID" value="NC_011186.1"/>
</dbReference>
<dbReference type="SMR" id="B5ETN1"/>
<dbReference type="KEGG" id="vfm:VFMJ11_A0500"/>
<dbReference type="HOGENOM" id="CLU_014801_4_0_6"/>
<dbReference type="UniPathway" id="UPA00379">
    <property type="reaction ID" value="UER00549"/>
</dbReference>
<dbReference type="Proteomes" id="UP000001857">
    <property type="component" value="Chromosome II"/>
</dbReference>
<dbReference type="GO" id="GO:0005737">
    <property type="term" value="C:cytoplasm"/>
    <property type="evidence" value="ECO:0007669"/>
    <property type="project" value="UniProtKB-SubCell"/>
</dbReference>
<dbReference type="GO" id="GO:0004397">
    <property type="term" value="F:histidine ammonia-lyase activity"/>
    <property type="evidence" value="ECO:0007669"/>
    <property type="project" value="UniProtKB-UniRule"/>
</dbReference>
<dbReference type="GO" id="GO:0019556">
    <property type="term" value="P:L-histidine catabolic process to glutamate and formamide"/>
    <property type="evidence" value="ECO:0007669"/>
    <property type="project" value="UniProtKB-UniPathway"/>
</dbReference>
<dbReference type="GO" id="GO:0019557">
    <property type="term" value="P:L-histidine catabolic process to glutamate and formate"/>
    <property type="evidence" value="ECO:0007669"/>
    <property type="project" value="UniProtKB-UniPathway"/>
</dbReference>
<dbReference type="CDD" id="cd00332">
    <property type="entry name" value="PAL-HAL"/>
    <property type="match status" value="1"/>
</dbReference>
<dbReference type="FunFam" id="1.10.275.10:FF:000005">
    <property type="entry name" value="Histidine ammonia-lyase"/>
    <property type="match status" value="1"/>
</dbReference>
<dbReference type="FunFam" id="1.20.200.10:FF:000003">
    <property type="entry name" value="Histidine ammonia-lyase"/>
    <property type="match status" value="1"/>
</dbReference>
<dbReference type="Gene3D" id="1.20.200.10">
    <property type="entry name" value="Fumarase/aspartase (Central domain)"/>
    <property type="match status" value="1"/>
</dbReference>
<dbReference type="Gene3D" id="1.10.275.10">
    <property type="entry name" value="Fumarase/aspartase (N-terminal domain)"/>
    <property type="match status" value="1"/>
</dbReference>
<dbReference type="HAMAP" id="MF_00229">
    <property type="entry name" value="His_ammonia_lyase"/>
    <property type="match status" value="1"/>
</dbReference>
<dbReference type="InterPro" id="IPR001106">
    <property type="entry name" value="Aromatic_Lyase"/>
</dbReference>
<dbReference type="InterPro" id="IPR024083">
    <property type="entry name" value="Fumarase/histidase_N"/>
</dbReference>
<dbReference type="InterPro" id="IPR005921">
    <property type="entry name" value="HutH"/>
</dbReference>
<dbReference type="InterPro" id="IPR008948">
    <property type="entry name" value="L-Aspartase-like"/>
</dbReference>
<dbReference type="InterPro" id="IPR022313">
    <property type="entry name" value="Phe/His_NH3-lyase_AS"/>
</dbReference>
<dbReference type="NCBIfam" id="TIGR01225">
    <property type="entry name" value="hutH"/>
    <property type="match status" value="1"/>
</dbReference>
<dbReference type="NCBIfam" id="NF006871">
    <property type="entry name" value="PRK09367.1"/>
    <property type="match status" value="1"/>
</dbReference>
<dbReference type="PANTHER" id="PTHR10362">
    <property type="entry name" value="HISTIDINE AMMONIA-LYASE"/>
    <property type="match status" value="1"/>
</dbReference>
<dbReference type="Pfam" id="PF00221">
    <property type="entry name" value="Lyase_aromatic"/>
    <property type="match status" value="1"/>
</dbReference>
<dbReference type="SUPFAM" id="SSF48557">
    <property type="entry name" value="L-aspartase-like"/>
    <property type="match status" value="1"/>
</dbReference>
<dbReference type="PROSITE" id="PS00488">
    <property type="entry name" value="PAL_HISTIDASE"/>
    <property type="match status" value="1"/>
</dbReference>
<organism>
    <name type="scientific">Aliivibrio fischeri (strain MJ11)</name>
    <name type="common">Vibrio fischeri</name>
    <dbReference type="NCBI Taxonomy" id="388396"/>
    <lineage>
        <taxon>Bacteria</taxon>
        <taxon>Pseudomonadati</taxon>
        <taxon>Pseudomonadota</taxon>
        <taxon>Gammaproteobacteria</taxon>
        <taxon>Vibrionales</taxon>
        <taxon>Vibrionaceae</taxon>
        <taxon>Aliivibrio</taxon>
    </lineage>
</organism>
<name>HUTH_ALIFM</name>
<comment type="catalytic activity">
    <reaction evidence="1">
        <text>L-histidine = trans-urocanate + NH4(+)</text>
        <dbReference type="Rhea" id="RHEA:21232"/>
        <dbReference type="ChEBI" id="CHEBI:17771"/>
        <dbReference type="ChEBI" id="CHEBI:28938"/>
        <dbReference type="ChEBI" id="CHEBI:57595"/>
        <dbReference type="EC" id="4.3.1.3"/>
    </reaction>
</comment>
<comment type="pathway">
    <text evidence="1">Amino-acid degradation; L-histidine degradation into L-glutamate; N-formimidoyl-L-glutamate from L-histidine: step 1/3.</text>
</comment>
<comment type="subcellular location">
    <subcellularLocation>
        <location evidence="1">Cytoplasm</location>
    </subcellularLocation>
</comment>
<comment type="PTM">
    <text evidence="1">Contains an active site 4-methylidene-imidazol-5-one (MIO), which is formed autocatalytically by cyclization and dehydration of residues Ala-Ser-Gly.</text>
</comment>
<comment type="similarity">
    <text evidence="1">Belongs to the PAL/histidase family.</text>
</comment>
<reference key="1">
    <citation type="submission" date="2008-08" db="EMBL/GenBank/DDBJ databases">
        <title>Complete sequence of Vibrio fischeri strain MJ11.</title>
        <authorList>
            <person name="Mandel M.J."/>
            <person name="Stabb E.V."/>
            <person name="Ruby E.G."/>
            <person name="Ferriera S."/>
            <person name="Johnson J."/>
            <person name="Kravitz S."/>
            <person name="Beeson K."/>
            <person name="Sutton G."/>
            <person name="Rogers Y.-H."/>
            <person name="Friedman R."/>
            <person name="Frazier M."/>
            <person name="Venter J.C."/>
        </authorList>
    </citation>
    <scope>NUCLEOTIDE SEQUENCE [LARGE SCALE GENOMIC DNA]</scope>
    <source>
        <strain>MJ11</strain>
    </source>
</reference>
<proteinExistence type="inferred from homology"/>
<gene>
    <name evidence="1" type="primary">hutH</name>
    <name type="ordered locus">VFMJ11_A0500</name>
</gene>
<accession>B5ETN1</accession>
<sequence>MYSLDIIPGKLSLKQLREVSRHPTKLSLDPNALPDMLISADVVAQVIKEDKTVYGINTGFGLLANTRIAEKDLETLQRSIVLSHAAGIGEFMDDATVRLMIILKINSLSRGYSGIRPLVIDALIQLVNSEVYPCIPKKGSVGASGDLAPLAHMSTVLLGEGEARYQDKIISGKEALDIAGLTPITLAPKEGLALLNGTQASTAFALEGLFAAEDLYASATVCGAMSVEAALGSRKPFDPRIHRVRGHRSQMDAALAYRHLLAQSSEIGLSHQCCERVQDPYSLRCQPQVMGACLQQIRNSADILEIEANSVSDNPLVFADDGDIISGGNFHAEPVAMAADNLALAISEIGSLSERRMALLIDSGLSKLPPFLVDNGGVNSGFMIAQVTAAALASENKTLAHPASVDSLPTSANQEDHVSMATFAGRRLGDMAENTRGILAVELLAAAQGLDFRAPNKSSDRIEIAKSLLRERVDFYDKDRYFAPDIAKANSLLKEATYNHLMPETLLPSL</sequence>